<organism>
    <name type="scientific">Bacillus subtilis (strain 168)</name>
    <dbReference type="NCBI Taxonomy" id="224308"/>
    <lineage>
        <taxon>Bacteria</taxon>
        <taxon>Bacillati</taxon>
        <taxon>Bacillota</taxon>
        <taxon>Bacilli</taxon>
        <taxon>Bacillales</taxon>
        <taxon>Bacillaceae</taxon>
        <taxon>Bacillus</taxon>
    </lineage>
</organism>
<dbReference type="EMBL" id="D50453">
    <property type="protein sequence ID" value="BAA09028.1"/>
    <property type="molecule type" value="Genomic_DNA"/>
</dbReference>
<dbReference type="EMBL" id="AL009126">
    <property type="protein sequence ID" value="CAB12205.1"/>
    <property type="molecule type" value="Genomic_DNA"/>
</dbReference>
<dbReference type="PIR" id="H69764">
    <property type="entry name" value="H69764"/>
</dbReference>
<dbReference type="RefSeq" id="NP_388279.1">
    <property type="nucleotide sequence ID" value="NC_000964.3"/>
</dbReference>
<dbReference type="RefSeq" id="WP_003246726.1">
    <property type="nucleotide sequence ID" value="NZ_OZ025638.1"/>
</dbReference>
<dbReference type="FunCoup" id="P94434">
    <property type="interactions" value="115"/>
</dbReference>
<dbReference type="STRING" id="224308.BSU03970"/>
<dbReference type="PaxDb" id="224308-BSU03970"/>
<dbReference type="EnsemblBacteria" id="CAB12205">
    <property type="protein sequence ID" value="CAB12205"/>
    <property type="gene ID" value="BSU_03970"/>
</dbReference>
<dbReference type="GeneID" id="939465"/>
<dbReference type="KEGG" id="bsu:BSU03970"/>
<dbReference type="PATRIC" id="fig|224308.179.peg.420"/>
<dbReference type="InParanoid" id="P94434"/>
<dbReference type="OrthoDB" id="2925690at2"/>
<dbReference type="BioCyc" id="BSUB:BSU03970-MONOMER"/>
<dbReference type="Proteomes" id="UP000001570">
    <property type="component" value="Chromosome"/>
</dbReference>
<dbReference type="GO" id="GO:0005886">
    <property type="term" value="C:plasma membrane"/>
    <property type="evidence" value="ECO:0007669"/>
    <property type="project" value="UniProtKB-SubCell"/>
</dbReference>
<accession>P94434</accession>
<evidence type="ECO:0000255" key="1"/>
<evidence type="ECO:0000269" key="2">
    <source>
    </source>
</evidence>
<evidence type="ECO:0000305" key="3"/>
<feature type="chain" id="PRO_0000049480" description="Uncharacterized protein YcnL">
    <location>
        <begin position="1"/>
        <end position="117"/>
    </location>
</feature>
<feature type="transmembrane region" description="Helical" evidence="1">
    <location>
        <begin position="43"/>
        <end position="63"/>
    </location>
</feature>
<feature type="transmembrane region" description="Helical" evidence="1">
    <location>
        <begin position="73"/>
        <end position="93"/>
    </location>
</feature>
<proteinExistence type="evidence at transcript level"/>
<gene>
    <name type="primary">ycnL</name>
    <name type="ordered locus">BSU03970</name>
</gene>
<keyword id="KW-1003">Cell membrane</keyword>
<keyword id="KW-0472">Membrane</keyword>
<keyword id="KW-1185">Reference proteome</keyword>
<keyword id="KW-0812">Transmembrane</keyword>
<keyword id="KW-1133">Transmembrane helix</keyword>
<protein>
    <recommendedName>
        <fullName>Uncharacterized protein YcnL</fullName>
    </recommendedName>
</protein>
<name>YCNL_BACSU</name>
<comment type="subcellular location">
    <subcellularLocation>
        <location evidence="3">Cell membrane</location>
        <topology evidence="3">Multi-pass membrane protein</topology>
    </subcellularLocation>
</comment>
<comment type="induction">
    <text evidence="2">Significantly induced under copper-limiting conditions.</text>
</comment>
<comment type="disruption phenotype">
    <text evidence="2">Cells lacking this gene show no difference in growth under copper deprivation or copper excess conditions.</text>
</comment>
<sequence length="117" mass="12975">MKETPCPNCGKPLTGDMVRSSNVPCQFRCGHCRERLYEYKVSAPIMLVSLAAIVLLIYLLMLLRNAAGSVLPAVQHVPMAVFALVCAYPVFIVSERMIAKYVIQNGNIIYRGKRKGS</sequence>
<reference key="1">
    <citation type="journal article" date="1996" name="Microbiology">
        <title>The 25 degrees-36 degrees region of the Bacillus subtilis chromosome: determination of the sequence of a 146 kb segment and identification of 113 genes.</title>
        <authorList>
            <person name="Yamane K."/>
            <person name="Kumano M."/>
            <person name="Kurita K."/>
        </authorList>
    </citation>
    <scope>NUCLEOTIDE SEQUENCE [GENOMIC DNA]</scope>
    <source>
        <strain>168</strain>
    </source>
</reference>
<reference key="2">
    <citation type="journal article" date="1997" name="Nature">
        <title>The complete genome sequence of the Gram-positive bacterium Bacillus subtilis.</title>
        <authorList>
            <person name="Kunst F."/>
            <person name="Ogasawara N."/>
            <person name="Moszer I."/>
            <person name="Albertini A.M."/>
            <person name="Alloni G."/>
            <person name="Azevedo V."/>
            <person name="Bertero M.G."/>
            <person name="Bessieres P."/>
            <person name="Bolotin A."/>
            <person name="Borchert S."/>
            <person name="Borriss R."/>
            <person name="Boursier L."/>
            <person name="Brans A."/>
            <person name="Braun M."/>
            <person name="Brignell S.C."/>
            <person name="Bron S."/>
            <person name="Brouillet S."/>
            <person name="Bruschi C.V."/>
            <person name="Caldwell B."/>
            <person name="Capuano V."/>
            <person name="Carter N.M."/>
            <person name="Choi S.-K."/>
            <person name="Codani J.-J."/>
            <person name="Connerton I.F."/>
            <person name="Cummings N.J."/>
            <person name="Daniel R.A."/>
            <person name="Denizot F."/>
            <person name="Devine K.M."/>
            <person name="Duesterhoeft A."/>
            <person name="Ehrlich S.D."/>
            <person name="Emmerson P.T."/>
            <person name="Entian K.-D."/>
            <person name="Errington J."/>
            <person name="Fabret C."/>
            <person name="Ferrari E."/>
            <person name="Foulger D."/>
            <person name="Fritz C."/>
            <person name="Fujita M."/>
            <person name="Fujita Y."/>
            <person name="Fuma S."/>
            <person name="Galizzi A."/>
            <person name="Galleron N."/>
            <person name="Ghim S.-Y."/>
            <person name="Glaser P."/>
            <person name="Goffeau A."/>
            <person name="Golightly E.J."/>
            <person name="Grandi G."/>
            <person name="Guiseppi G."/>
            <person name="Guy B.J."/>
            <person name="Haga K."/>
            <person name="Haiech J."/>
            <person name="Harwood C.R."/>
            <person name="Henaut A."/>
            <person name="Hilbert H."/>
            <person name="Holsappel S."/>
            <person name="Hosono S."/>
            <person name="Hullo M.-F."/>
            <person name="Itaya M."/>
            <person name="Jones L.-M."/>
            <person name="Joris B."/>
            <person name="Karamata D."/>
            <person name="Kasahara Y."/>
            <person name="Klaerr-Blanchard M."/>
            <person name="Klein C."/>
            <person name="Kobayashi Y."/>
            <person name="Koetter P."/>
            <person name="Koningstein G."/>
            <person name="Krogh S."/>
            <person name="Kumano M."/>
            <person name="Kurita K."/>
            <person name="Lapidus A."/>
            <person name="Lardinois S."/>
            <person name="Lauber J."/>
            <person name="Lazarevic V."/>
            <person name="Lee S.-M."/>
            <person name="Levine A."/>
            <person name="Liu H."/>
            <person name="Masuda S."/>
            <person name="Mauel C."/>
            <person name="Medigue C."/>
            <person name="Medina N."/>
            <person name="Mellado R.P."/>
            <person name="Mizuno M."/>
            <person name="Moestl D."/>
            <person name="Nakai S."/>
            <person name="Noback M."/>
            <person name="Noone D."/>
            <person name="O'Reilly M."/>
            <person name="Ogawa K."/>
            <person name="Ogiwara A."/>
            <person name="Oudega B."/>
            <person name="Park S.-H."/>
            <person name="Parro V."/>
            <person name="Pohl T.M."/>
            <person name="Portetelle D."/>
            <person name="Porwollik S."/>
            <person name="Prescott A.M."/>
            <person name="Presecan E."/>
            <person name="Pujic P."/>
            <person name="Purnelle B."/>
            <person name="Rapoport G."/>
            <person name="Rey M."/>
            <person name="Reynolds S."/>
            <person name="Rieger M."/>
            <person name="Rivolta C."/>
            <person name="Rocha E."/>
            <person name="Roche B."/>
            <person name="Rose M."/>
            <person name="Sadaie Y."/>
            <person name="Sato T."/>
            <person name="Scanlan E."/>
            <person name="Schleich S."/>
            <person name="Schroeter R."/>
            <person name="Scoffone F."/>
            <person name="Sekiguchi J."/>
            <person name="Sekowska A."/>
            <person name="Seror S.J."/>
            <person name="Serror P."/>
            <person name="Shin B.-S."/>
            <person name="Soldo B."/>
            <person name="Sorokin A."/>
            <person name="Tacconi E."/>
            <person name="Takagi T."/>
            <person name="Takahashi H."/>
            <person name="Takemaru K."/>
            <person name="Takeuchi M."/>
            <person name="Tamakoshi A."/>
            <person name="Tanaka T."/>
            <person name="Terpstra P."/>
            <person name="Tognoni A."/>
            <person name="Tosato V."/>
            <person name="Uchiyama S."/>
            <person name="Vandenbol M."/>
            <person name="Vannier F."/>
            <person name="Vassarotti A."/>
            <person name="Viari A."/>
            <person name="Wambutt R."/>
            <person name="Wedler E."/>
            <person name="Wedler H."/>
            <person name="Weitzenegger T."/>
            <person name="Winters P."/>
            <person name="Wipat A."/>
            <person name="Yamamoto H."/>
            <person name="Yamane K."/>
            <person name="Yasumoto K."/>
            <person name="Yata K."/>
            <person name="Yoshida K."/>
            <person name="Yoshikawa H.-F."/>
            <person name="Zumstein E."/>
            <person name="Yoshikawa H."/>
            <person name="Danchin A."/>
        </authorList>
    </citation>
    <scope>NUCLEOTIDE SEQUENCE [LARGE SCALE GENOMIC DNA]</scope>
    <source>
        <strain>168</strain>
    </source>
</reference>
<reference key="3">
    <citation type="journal article" date="2009" name="J. Bacteriol.">
        <title>Copper acquisition is mediated by ycnJ and regulated by ycnK and csoR in Bacillus subtilis.</title>
        <authorList>
            <person name="Chillappagari S."/>
            <person name="Miethke M."/>
            <person name="Trip H."/>
            <person name="Kuipers O.P."/>
            <person name="Marahiel M.A."/>
        </authorList>
    </citation>
    <scope>INDUCTION</scope>
    <scope>DISRUPTION PHENOTYPE</scope>
    <source>
        <strain>ATCC 21332 / IAM 1213</strain>
    </source>
</reference>